<evidence type="ECO:0000255" key="1">
    <source>
        <dbReference type="HAMAP-Rule" id="MF_01104"/>
    </source>
</evidence>
<comment type="function">
    <text evidence="1">Interacts with the SecY protein in vivo. May bind preferentially to an uncomplexed state of SecY, thus functioning either as a chelating agent for excess SecY in the cell or as a regulatory factor that negatively controls the translocase function.</text>
</comment>
<comment type="subcellular location">
    <subcellularLocation>
        <location evidence="1">Cell inner membrane</location>
        <topology evidence="1">Peripheral membrane protein</topology>
        <orientation evidence="1">Cytoplasmic side</orientation>
    </subcellularLocation>
    <text evidence="1">Loosely associated with the cytoplasmic side of the inner membrane, probably via SecY.</text>
</comment>
<comment type="similarity">
    <text evidence="1">Belongs to the Syd family.</text>
</comment>
<protein>
    <recommendedName>
        <fullName evidence="1">Protein Syd</fullName>
    </recommendedName>
</protein>
<feature type="chain" id="PRO_0000214137" description="Protein Syd">
    <location>
        <begin position="1"/>
        <end position="181"/>
    </location>
</feature>
<gene>
    <name evidence="1" type="primary">syd</name>
    <name type="ordered locus">Z4110</name>
    <name type="ordered locus">ECs3653</name>
</gene>
<proteinExistence type="inferred from homology"/>
<keyword id="KW-0997">Cell inner membrane</keyword>
<keyword id="KW-1003">Cell membrane</keyword>
<keyword id="KW-0472">Membrane</keyword>
<keyword id="KW-1185">Reference proteome</keyword>
<organism>
    <name type="scientific">Escherichia coli O157:H7</name>
    <dbReference type="NCBI Taxonomy" id="83334"/>
    <lineage>
        <taxon>Bacteria</taxon>
        <taxon>Pseudomonadati</taxon>
        <taxon>Pseudomonadota</taxon>
        <taxon>Gammaproteobacteria</taxon>
        <taxon>Enterobacterales</taxon>
        <taxon>Enterobacteriaceae</taxon>
        <taxon>Escherichia</taxon>
    </lineage>
</organism>
<name>SYDP_ECO57</name>
<sequence length="181" mass="20719">MDDLTAQALKDFTARYCDAWHEEHKSWPLSEELYGVPSPCIISTTEDAVYWQPQPFTGEQNVNAVERAFDIVIQPTIHTFYTTQFAGDMHAQFGDIKLTLLQTWSEDDFRRVQENLIGHLVTQKRLKLPPTLFIATLEEELEVISVCNLSGEVCKETLGTRKRTHLAPNLAEFLNQLKPLL</sequence>
<dbReference type="EMBL" id="AE005174">
    <property type="protein sequence ID" value="AAG57907.1"/>
    <property type="molecule type" value="Genomic_DNA"/>
</dbReference>
<dbReference type="EMBL" id="BA000007">
    <property type="protein sequence ID" value="BAB37076.1"/>
    <property type="molecule type" value="Genomic_DNA"/>
</dbReference>
<dbReference type="PIR" id="E91085">
    <property type="entry name" value="E91085"/>
</dbReference>
<dbReference type="PIR" id="G85930">
    <property type="entry name" value="G85930"/>
</dbReference>
<dbReference type="RefSeq" id="NP_311680.1">
    <property type="nucleotide sequence ID" value="NC_002695.1"/>
</dbReference>
<dbReference type="RefSeq" id="WP_000342430.1">
    <property type="nucleotide sequence ID" value="NZ_VOAI01000003.1"/>
</dbReference>
<dbReference type="SMR" id="Q8X6T2"/>
<dbReference type="STRING" id="155864.Z4110"/>
<dbReference type="GeneID" id="916531"/>
<dbReference type="KEGG" id="ece:Z4110"/>
<dbReference type="KEGG" id="ecs:ECs_3653"/>
<dbReference type="PATRIC" id="fig|386585.9.peg.3819"/>
<dbReference type="eggNOG" id="ENOG502ZCMR">
    <property type="taxonomic scope" value="Bacteria"/>
</dbReference>
<dbReference type="HOGENOM" id="CLU_121866_0_0_6"/>
<dbReference type="OMA" id="WIEIPGE"/>
<dbReference type="Proteomes" id="UP000000558">
    <property type="component" value="Chromosome"/>
</dbReference>
<dbReference type="Proteomes" id="UP000002519">
    <property type="component" value="Chromosome"/>
</dbReference>
<dbReference type="GO" id="GO:0009898">
    <property type="term" value="C:cytoplasmic side of plasma membrane"/>
    <property type="evidence" value="ECO:0007669"/>
    <property type="project" value="InterPro"/>
</dbReference>
<dbReference type="CDD" id="cd16323">
    <property type="entry name" value="Syd"/>
    <property type="match status" value="1"/>
</dbReference>
<dbReference type="FunFam" id="3.40.1580.20:FF:000001">
    <property type="entry name" value="Protein Syd"/>
    <property type="match status" value="1"/>
</dbReference>
<dbReference type="Gene3D" id="3.40.1580.20">
    <property type="entry name" value="Syd protein"/>
    <property type="match status" value="1"/>
</dbReference>
<dbReference type="HAMAP" id="MF_01104">
    <property type="entry name" value="Syd"/>
    <property type="match status" value="1"/>
</dbReference>
<dbReference type="InterPro" id="IPR009948">
    <property type="entry name" value="Syd"/>
</dbReference>
<dbReference type="InterPro" id="IPR038228">
    <property type="entry name" value="Syd_sf"/>
</dbReference>
<dbReference type="NCBIfam" id="NF003439">
    <property type="entry name" value="PRK04968.1"/>
    <property type="match status" value="1"/>
</dbReference>
<dbReference type="Pfam" id="PF07348">
    <property type="entry name" value="Syd"/>
    <property type="match status" value="1"/>
</dbReference>
<reference key="1">
    <citation type="journal article" date="2001" name="Nature">
        <title>Genome sequence of enterohaemorrhagic Escherichia coli O157:H7.</title>
        <authorList>
            <person name="Perna N.T."/>
            <person name="Plunkett G. III"/>
            <person name="Burland V."/>
            <person name="Mau B."/>
            <person name="Glasner J.D."/>
            <person name="Rose D.J."/>
            <person name="Mayhew G.F."/>
            <person name="Evans P.S."/>
            <person name="Gregor J."/>
            <person name="Kirkpatrick H.A."/>
            <person name="Posfai G."/>
            <person name="Hackett J."/>
            <person name="Klink S."/>
            <person name="Boutin A."/>
            <person name="Shao Y."/>
            <person name="Miller L."/>
            <person name="Grotbeck E.J."/>
            <person name="Davis N.W."/>
            <person name="Lim A."/>
            <person name="Dimalanta E.T."/>
            <person name="Potamousis K."/>
            <person name="Apodaca J."/>
            <person name="Anantharaman T.S."/>
            <person name="Lin J."/>
            <person name="Yen G."/>
            <person name="Schwartz D.C."/>
            <person name="Welch R.A."/>
            <person name="Blattner F.R."/>
        </authorList>
    </citation>
    <scope>NUCLEOTIDE SEQUENCE [LARGE SCALE GENOMIC DNA]</scope>
    <source>
        <strain>O157:H7 / EDL933 / ATCC 700927 / EHEC</strain>
    </source>
</reference>
<reference key="2">
    <citation type="journal article" date="2001" name="DNA Res.">
        <title>Complete genome sequence of enterohemorrhagic Escherichia coli O157:H7 and genomic comparison with a laboratory strain K-12.</title>
        <authorList>
            <person name="Hayashi T."/>
            <person name="Makino K."/>
            <person name="Ohnishi M."/>
            <person name="Kurokawa K."/>
            <person name="Ishii K."/>
            <person name="Yokoyama K."/>
            <person name="Han C.-G."/>
            <person name="Ohtsubo E."/>
            <person name="Nakayama K."/>
            <person name="Murata T."/>
            <person name="Tanaka M."/>
            <person name="Tobe T."/>
            <person name="Iida T."/>
            <person name="Takami H."/>
            <person name="Honda T."/>
            <person name="Sasakawa C."/>
            <person name="Ogasawara N."/>
            <person name="Yasunaga T."/>
            <person name="Kuhara S."/>
            <person name="Shiba T."/>
            <person name="Hattori M."/>
            <person name="Shinagawa H."/>
        </authorList>
    </citation>
    <scope>NUCLEOTIDE SEQUENCE [LARGE SCALE GENOMIC DNA]</scope>
    <source>
        <strain>O157:H7 / Sakai / RIMD 0509952 / EHEC</strain>
    </source>
</reference>
<accession>Q8X6T2</accession>